<name>ERIC1_HUMAN</name>
<evidence type="ECO:0000256" key="1">
    <source>
        <dbReference type="SAM" id="MobiDB-lite"/>
    </source>
</evidence>
<evidence type="ECO:0000269" key="2">
    <source>
    </source>
</evidence>
<evidence type="ECO:0000305" key="3"/>
<evidence type="ECO:0007744" key="4">
    <source>
    </source>
</evidence>
<evidence type="ECO:0007744" key="5">
    <source>
    </source>
</evidence>
<evidence type="ECO:0007744" key="6">
    <source>
    </source>
</evidence>
<evidence type="ECO:0007744" key="7">
    <source>
    </source>
</evidence>
<evidence type="ECO:0007744" key="8">
    <source>
    </source>
</evidence>
<evidence type="ECO:0007744" key="9">
    <source>
    </source>
</evidence>
<accession>Q86X53</accession>
<accession>A8K2J9</accession>
<accession>Q9P063</accession>
<keyword id="KW-0007">Acetylation</keyword>
<keyword id="KW-0597">Phosphoprotein</keyword>
<keyword id="KW-1267">Proteomics identification</keyword>
<keyword id="KW-1185">Reference proteome</keyword>
<proteinExistence type="evidence at protein level"/>
<organism>
    <name type="scientific">Homo sapiens</name>
    <name type="common">Human</name>
    <dbReference type="NCBI Taxonomy" id="9606"/>
    <lineage>
        <taxon>Eukaryota</taxon>
        <taxon>Metazoa</taxon>
        <taxon>Chordata</taxon>
        <taxon>Craniata</taxon>
        <taxon>Vertebrata</taxon>
        <taxon>Euteleostomi</taxon>
        <taxon>Mammalia</taxon>
        <taxon>Eutheria</taxon>
        <taxon>Euarchontoglires</taxon>
        <taxon>Primates</taxon>
        <taxon>Haplorrhini</taxon>
        <taxon>Catarrhini</taxon>
        <taxon>Hominidae</taxon>
        <taxon>Homo</taxon>
    </lineage>
</organism>
<protein>
    <recommendedName>
        <fullName>Glutamate-rich protein 1</fullName>
    </recommendedName>
</protein>
<comment type="interaction">
    <interactant intactId="EBI-12902263">
        <id>Q86X53</id>
    </interactant>
    <interactant intactId="EBI-2602570">
        <id>Q9BT17</id>
        <label>MTG1</label>
    </interactant>
    <organismsDiffer>false</organismsDiffer>
    <experiments>3</experiments>
</comment>
<comment type="sequence caution" evidence="3">
    <conflict type="erroneous initiation">
        <sequence resource="EMBL-CDS" id="AAF28997"/>
    </conflict>
</comment>
<dbReference type="EMBL" id="AK290264">
    <property type="protein sequence ID" value="BAF82953.1"/>
    <property type="molecule type" value="mRNA"/>
</dbReference>
<dbReference type="EMBL" id="CH471181">
    <property type="protein sequence ID" value="EAW51467.1"/>
    <property type="molecule type" value="Genomic_DNA"/>
</dbReference>
<dbReference type="EMBL" id="BC046243">
    <property type="protein sequence ID" value="AAH46243.1"/>
    <property type="molecule type" value="mRNA"/>
</dbReference>
<dbReference type="EMBL" id="AF161437">
    <property type="protein sequence ID" value="AAF28997.1"/>
    <property type="status" value="ALT_INIT"/>
    <property type="molecule type" value="mRNA"/>
</dbReference>
<dbReference type="CCDS" id="CCDS5955.1"/>
<dbReference type="RefSeq" id="NP_997215.1">
    <property type="nucleotide sequence ID" value="NM_207332.3"/>
</dbReference>
<dbReference type="BioGRID" id="127615">
    <property type="interactions" value="20"/>
</dbReference>
<dbReference type="FunCoup" id="Q86X53">
    <property type="interactions" value="1171"/>
</dbReference>
<dbReference type="IntAct" id="Q86X53">
    <property type="interactions" value="6"/>
</dbReference>
<dbReference type="STRING" id="9606.ENSP00000262109"/>
<dbReference type="GlyGen" id="Q86X53">
    <property type="glycosylation" value="1 site"/>
</dbReference>
<dbReference type="iPTMnet" id="Q86X53"/>
<dbReference type="PhosphoSitePlus" id="Q86X53"/>
<dbReference type="BioMuta" id="ERICH1"/>
<dbReference type="DMDM" id="74727771"/>
<dbReference type="jPOST" id="Q86X53"/>
<dbReference type="MassIVE" id="Q86X53"/>
<dbReference type="PaxDb" id="9606-ENSP00000262109"/>
<dbReference type="PeptideAtlas" id="Q86X53"/>
<dbReference type="ProteomicsDB" id="70240"/>
<dbReference type="Pumba" id="Q86X53"/>
<dbReference type="Antibodypedia" id="1007">
    <property type="antibodies" value="20 antibodies from 10 providers"/>
</dbReference>
<dbReference type="DNASU" id="157697"/>
<dbReference type="Ensembl" id="ENST00000262109.8">
    <property type="protein sequence ID" value="ENSP00000262109.7"/>
    <property type="gene ID" value="ENSG00000104714.14"/>
</dbReference>
<dbReference type="GeneID" id="157697"/>
<dbReference type="KEGG" id="hsa:157697"/>
<dbReference type="MANE-Select" id="ENST00000262109.8">
    <property type="protein sequence ID" value="ENSP00000262109.7"/>
    <property type="RefSeq nucleotide sequence ID" value="NM_207332.3"/>
    <property type="RefSeq protein sequence ID" value="NP_997215.1"/>
</dbReference>
<dbReference type="UCSC" id="uc003wph.4">
    <property type="organism name" value="human"/>
</dbReference>
<dbReference type="AGR" id="HGNC:27234"/>
<dbReference type="CTD" id="157697"/>
<dbReference type="DisGeNET" id="157697"/>
<dbReference type="GeneCards" id="ERICH1"/>
<dbReference type="HGNC" id="HGNC:27234">
    <property type="gene designation" value="ERICH1"/>
</dbReference>
<dbReference type="HPA" id="ENSG00000104714">
    <property type="expression patterns" value="Low tissue specificity"/>
</dbReference>
<dbReference type="neXtProt" id="NX_Q86X53"/>
<dbReference type="OpenTargets" id="ENSG00000104714"/>
<dbReference type="PharmGKB" id="PA142671903"/>
<dbReference type="VEuPathDB" id="HostDB:ENSG00000104714"/>
<dbReference type="eggNOG" id="ENOG502S06A">
    <property type="taxonomic scope" value="Eukaryota"/>
</dbReference>
<dbReference type="GeneTree" id="ENSGT00390000005606"/>
<dbReference type="HOGENOM" id="CLU_041433_0_0_1"/>
<dbReference type="InParanoid" id="Q86X53"/>
<dbReference type="OMA" id="YWITEIL"/>
<dbReference type="OrthoDB" id="9539182at2759"/>
<dbReference type="PAN-GO" id="Q86X53">
    <property type="GO annotations" value="0 GO annotations based on evolutionary models"/>
</dbReference>
<dbReference type="PhylomeDB" id="Q86X53"/>
<dbReference type="TreeFam" id="TF335794"/>
<dbReference type="PathwayCommons" id="Q86X53"/>
<dbReference type="SignaLink" id="Q86X53"/>
<dbReference type="BioGRID-ORCS" id="157697">
    <property type="hits" value="6 hits in 1158 CRISPR screens"/>
</dbReference>
<dbReference type="ChiTaRS" id="ERICH1">
    <property type="organism name" value="human"/>
</dbReference>
<dbReference type="GenomeRNAi" id="157697"/>
<dbReference type="Pharos" id="Q86X53">
    <property type="development level" value="Tdark"/>
</dbReference>
<dbReference type="PRO" id="PR:Q86X53"/>
<dbReference type="Proteomes" id="UP000005640">
    <property type="component" value="Chromosome 8"/>
</dbReference>
<dbReference type="RNAct" id="Q86X53">
    <property type="molecule type" value="protein"/>
</dbReference>
<dbReference type="Bgee" id="ENSG00000104714">
    <property type="expression patterns" value="Expressed in monocyte and 178 other cell types or tissues"/>
</dbReference>
<dbReference type="ExpressionAtlas" id="Q86X53">
    <property type="expression patterns" value="baseline and differential"/>
</dbReference>
<dbReference type="InterPro" id="IPR026719">
    <property type="entry name" value="ERICH1"/>
</dbReference>
<dbReference type="PANTHER" id="PTHR22444">
    <property type="entry name" value="GLUTAMATE-RICH PROTEIN 1"/>
    <property type="match status" value="1"/>
</dbReference>
<dbReference type="PANTHER" id="PTHR22444:SF1">
    <property type="entry name" value="GLUTAMATE-RICH PROTEIN 1"/>
    <property type="match status" value="1"/>
</dbReference>
<feature type="chain" id="PRO_0000087029" description="Glutamate-rich protein 1">
    <location>
        <begin position="1"/>
        <end position="443"/>
    </location>
</feature>
<feature type="region of interest" description="Disordered" evidence="1">
    <location>
        <begin position="15"/>
        <end position="333"/>
    </location>
</feature>
<feature type="compositionally biased region" description="Basic and acidic residues" evidence="1">
    <location>
        <begin position="42"/>
        <end position="54"/>
    </location>
</feature>
<feature type="compositionally biased region" description="Polar residues" evidence="1">
    <location>
        <begin position="87"/>
        <end position="97"/>
    </location>
</feature>
<feature type="compositionally biased region" description="Basic residues" evidence="1">
    <location>
        <begin position="109"/>
        <end position="124"/>
    </location>
</feature>
<feature type="compositionally biased region" description="Basic residues" evidence="1">
    <location>
        <begin position="159"/>
        <end position="176"/>
    </location>
</feature>
<feature type="compositionally biased region" description="Acidic residues" evidence="1">
    <location>
        <begin position="205"/>
        <end position="226"/>
    </location>
</feature>
<feature type="compositionally biased region" description="Acidic residues" evidence="1">
    <location>
        <begin position="250"/>
        <end position="266"/>
    </location>
</feature>
<feature type="compositionally biased region" description="Basic and acidic residues" evidence="1">
    <location>
        <begin position="281"/>
        <end position="296"/>
    </location>
</feature>
<feature type="compositionally biased region" description="Acidic residues" evidence="1">
    <location>
        <begin position="297"/>
        <end position="332"/>
    </location>
</feature>
<feature type="modified residue" description="N6-acetyllysine" evidence="5">
    <location>
        <position position="12"/>
    </location>
</feature>
<feature type="modified residue" description="Phosphoserine" evidence="4 6 7 8 9">
    <location>
        <position position="238"/>
    </location>
</feature>
<feature type="modified residue" description="Phosphoserine" evidence="8 9">
    <location>
        <position position="254"/>
    </location>
</feature>
<feature type="modified residue" description="Phosphothreonine" evidence="6">
    <location>
        <position position="277"/>
    </location>
</feature>
<feature type="sequence variant" id="VAR_035915" description="In a colorectal cancer sample; somatic mutation; dbSNP:rs774405503." evidence="2">
    <original>L</original>
    <variation>F</variation>
    <location>
        <position position="365"/>
    </location>
</feature>
<feature type="sequence variant" id="VAR_050974" description="In dbSNP:rs1703879.">
    <original>R</original>
    <variation>S</variation>
    <location>
        <position position="403"/>
    </location>
</feature>
<feature type="sequence conflict" description="In Ref. 4; AAF28997." evidence="3" ref="4">
    <original>A</original>
    <variation>Q</variation>
    <location>
        <position position="3"/>
    </location>
</feature>
<gene>
    <name type="primary">ERICH1</name>
    <name type="ORF">HSPC319</name>
</gene>
<reference key="1">
    <citation type="journal article" date="2004" name="Nat. Genet.">
        <title>Complete sequencing and characterization of 21,243 full-length human cDNAs.</title>
        <authorList>
            <person name="Ota T."/>
            <person name="Suzuki Y."/>
            <person name="Nishikawa T."/>
            <person name="Otsuki T."/>
            <person name="Sugiyama T."/>
            <person name="Irie R."/>
            <person name="Wakamatsu A."/>
            <person name="Hayashi K."/>
            <person name="Sato H."/>
            <person name="Nagai K."/>
            <person name="Kimura K."/>
            <person name="Makita H."/>
            <person name="Sekine M."/>
            <person name="Obayashi M."/>
            <person name="Nishi T."/>
            <person name="Shibahara T."/>
            <person name="Tanaka T."/>
            <person name="Ishii S."/>
            <person name="Yamamoto J."/>
            <person name="Saito K."/>
            <person name="Kawai Y."/>
            <person name="Isono Y."/>
            <person name="Nakamura Y."/>
            <person name="Nagahari K."/>
            <person name="Murakami K."/>
            <person name="Yasuda T."/>
            <person name="Iwayanagi T."/>
            <person name="Wagatsuma M."/>
            <person name="Shiratori A."/>
            <person name="Sudo H."/>
            <person name="Hosoiri T."/>
            <person name="Kaku Y."/>
            <person name="Kodaira H."/>
            <person name="Kondo H."/>
            <person name="Sugawara M."/>
            <person name="Takahashi M."/>
            <person name="Kanda K."/>
            <person name="Yokoi T."/>
            <person name="Furuya T."/>
            <person name="Kikkawa E."/>
            <person name="Omura Y."/>
            <person name="Abe K."/>
            <person name="Kamihara K."/>
            <person name="Katsuta N."/>
            <person name="Sato K."/>
            <person name="Tanikawa M."/>
            <person name="Yamazaki M."/>
            <person name="Ninomiya K."/>
            <person name="Ishibashi T."/>
            <person name="Yamashita H."/>
            <person name="Murakawa K."/>
            <person name="Fujimori K."/>
            <person name="Tanai H."/>
            <person name="Kimata M."/>
            <person name="Watanabe M."/>
            <person name="Hiraoka S."/>
            <person name="Chiba Y."/>
            <person name="Ishida S."/>
            <person name="Ono Y."/>
            <person name="Takiguchi S."/>
            <person name="Watanabe S."/>
            <person name="Yosida M."/>
            <person name="Hotuta T."/>
            <person name="Kusano J."/>
            <person name="Kanehori K."/>
            <person name="Takahashi-Fujii A."/>
            <person name="Hara H."/>
            <person name="Tanase T.-O."/>
            <person name="Nomura Y."/>
            <person name="Togiya S."/>
            <person name="Komai F."/>
            <person name="Hara R."/>
            <person name="Takeuchi K."/>
            <person name="Arita M."/>
            <person name="Imose N."/>
            <person name="Musashino K."/>
            <person name="Yuuki H."/>
            <person name="Oshima A."/>
            <person name="Sasaki N."/>
            <person name="Aotsuka S."/>
            <person name="Yoshikawa Y."/>
            <person name="Matsunawa H."/>
            <person name="Ichihara T."/>
            <person name="Shiohata N."/>
            <person name="Sano S."/>
            <person name="Moriya S."/>
            <person name="Momiyama H."/>
            <person name="Satoh N."/>
            <person name="Takami S."/>
            <person name="Terashima Y."/>
            <person name="Suzuki O."/>
            <person name="Nakagawa S."/>
            <person name="Senoh A."/>
            <person name="Mizoguchi H."/>
            <person name="Goto Y."/>
            <person name="Shimizu F."/>
            <person name="Wakebe H."/>
            <person name="Hishigaki H."/>
            <person name="Watanabe T."/>
            <person name="Sugiyama A."/>
            <person name="Takemoto M."/>
            <person name="Kawakami B."/>
            <person name="Yamazaki M."/>
            <person name="Watanabe K."/>
            <person name="Kumagai A."/>
            <person name="Itakura S."/>
            <person name="Fukuzumi Y."/>
            <person name="Fujimori Y."/>
            <person name="Komiyama M."/>
            <person name="Tashiro H."/>
            <person name="Tanigami A."/>
            <person name="Fujiwara T."/>
            <person name="Ono T."/>
            <person name="Yamada K."/>
            <person name="Fujii Y."/>
            <person name="Ozaki K."/>
            <person name="Hirao M."/>
            <person name="Ohmori Y."/>
            <person name="Kawabata A."/>
            <person name="Hikiji T."/>
            <person name="Kobatake N."/>
            <person name="Inagaki H."/>
            <person name="Ikema Y."/>
            <person name="Okamoto S."/>
            <person name="Okitani R."/>
            <person name="Kawakami T."/>
            <person name="Noguchi S."/>
            <person name="Itoh T."/>
            <person name="Shigeta K."/>
            <person name="Senba T."/>
            <person name="Matsumura K."/>
            <person name="Nakajima Y."/>
            <person name="Mizuno T."/>
            <person name="Morinaga M."/>
            <person name="Sasaki M."/>
            <person name="Togashi T."/>
            <person name="Oyama M."/>
            <person name="Hata H."/>
            <person name="Watanabe M."/>
            <person name="Komatsu T."/>
            <person name="Mizushima-Sugano J."/>
            <person name="Satoh T."/>
            <person name="Shirai Y."/>
            <person name="Takahashi Y."/>
            <person name="Nakagawa K."/>
            <person name="Okumura K."/>
            <person name="Nagase T."/>
            <person name="Nomura N."/>
            <person name="Kikuchi H."/>
            <person name="Masuho Y."/>
            <person name="Yamashita R."/>
            <person name="Nakai K."/>
            <person name="Yada T."/>
            <person name="Nakamura Y."/>
            <person name="Ohara O."/>
            <person name="Isogai T."/>
            <person name="Sugano S."/>
        </authorList>
    </citation>
    <scope>NUCLEOTIDE SEQUENCE [LARGE SCALE MRNA]</scope>
    <source>
        <tissue>Colon</tissue>
    </source>
</reference>
<reference key="2">
    <citation type="submission" date="2005-07" db="EMBL/GenBank/DDBJ databases">
        <authorList>
            <person name="Mural R.J."/>
            <person name="Istrail S."/>
            <person name="Sutton G.G."/>
            <person name="Florea L."/>
            <person name="Halpern A.L."/>
            <person name="Mobarry C.M."/>
            <person name="Lippert R."/>
            <person name="Walenz B."/>
            <person name="Shatkay H."/>
            <person name="Dew I."/>
            <person name="Miller J.R."/>
            <person name="Flanigan M.J."/>
            <person name="Edwards N.J."/>
            <person name="Bolanos R."/>
            <person name="Fasulo D."/>
            <person name="Halldorsson B.V."/>
            <person name="Hannenhalli S."/>
            <person name="Turner R."/>
            <person name="Yooseph S."/>
            <person name="Lu F."/>
            <person name="Nusskern D.R."/>
            <person name="Shue B.C."/>
            <person name="Zheng X.H."/>
            <person name="Zhong F."/>
            <person name="Delcher A.L."/>
            <person name="Huson D.H."/>
            <person name="Kravitz S.A."/>
            <person name="Mouchard L."/>
            <person name="Reinert K."/>
            <person name="Remington K.A."/>
            <person name="Clark A.G."/>
            <person name="Waterman M.S."/>
            <person name="Eichler E.E."/>
            <person name="Adams M.D."/>
            <person name="Hunkapiller M.W."/>
            <person name="Myers E.W."/>
            <person name="Venter J.C."/>
        </authorList>
    </citation>
    <scope>NUCLEOTIDE SEQUENCE [LARGE SCALE GENOMIC DNA]</scope>
</reference>
<reference key="3">
    <citation type="journal article" date="2004" name="Genome Res.">
        <title>The status, quality, and expansion of the NIH full-length cDNA project: the Mammalian Gene Collection (MGC).</title>
        <authorList>
            <consortium name="The MGC Project Team"/>
        </authorList>
    </citation>
    <scope>NUCLEOTIDE SEQUENCE [LARGE SCALE MRNA]</scope>
    <source>
        <tissue>Lung</tissue>
    </source>
</reference>
<reference key="4">
    <citation type="submission" date="1999-05" db="EMBL/GenBank/DDBJ databases">
        <title>Human partial CDS from CD34+ stem cells.</title>
        <authorList>
            <person name="Ye M."/>
            <person name="Zhang Q.-H."/>
            <person name="Zhou J."/>
            <person name="Shen Y."/>
            <person name="Wu X.-Y."/>
            <person name="Guan Z.Q."/>
            <person name="Wang L."/>
            <person name="Fan H.-Y."/>
            <person name="Mao Y.-F."/>
            <person name="Dai M."/>
            <person name="Huang Q.-H."/>
            <person name="Chen S.-J."/>
            <person name="Chen Z."/>
        </authorList>
    </citation>
    <scope>NUCLEOTIDE SEQUENCE [LARGE SCALE MRNA] OF 1-158</scope>
    <source>
        <tissue>Umbilical cord blood</tissue>
    </source>
</reference>
<reference key="5">
    <citation type="journal article" date="2008" name="Proc. Natl. Acad. Sci. U.S.A.">
        <title>A quantitative atlas of mitotic phosphorylation.</title>
        <authorList>
            <person name="Dephoure N."/>
            <person name="Zhou C."/>
            <person name="Villen J."/>
            <person name="Beausoleil S.A."/>
            <person name="Bakalarski C.E."/>
            <person name="Elledge S.J."/>
            <person name="Gygi S.P."/>
        </authorList>
    </citation>
    <scope>PHOSPHORYLATION [LARGE SCALE ANALYSIS] AT SER-238</scope>
    <scope>IDENTIFICATION BY MASS SPECTROMETRY [LARGE SCALE ANALYSIS]</scope>
    <source>
        <tissue>Cervix carcinoma</tissue>
    </source>
</reference>
<reference key="6">
    <citation type="journal article" date="2009" name="Sci. Signal.">
        <title>Quantitative phosphoproteomic analysis of T cell receptor signaling reveals system-wide modulation of protein-protein interactions.</title>
        <authorList>
            <person name="Mayya V."/>
            <person name="Lundgren D.H."/>
            <person name="Hwang S.-I."/>
            <person name="Rezaul K."/>
            <person name="Wu L."/>
            <person name="Eng J.K."/>
            <person name="Rodionov V."/>
            <person name="Han D.K."/>
        </authorList>
    </citation>
    <scope>PHOSPHORYLATION [LARGE SCALE ANALYSIS] AT SER-238 AND THR-277</scope>
    <scope>IDENTIFICATION BY MASS SPECTROMETRY [LARGE SCALE ANALYSIS]</scope>
    <source>
        <tissue>Leukemic T-cell</tissue>
    </source>
</reference>
<reference key="7">
    <citation type="journal article" date="2009" name="Science">
        <title>Lysine acetylation targets protein complexes and co-regulates major cellular functions.</title>
        <authorList>
            <person name="Choudhary C."/>
            <person name="Kumar C."/>
            <person name="Gnad F."/>
            <person name="Nielsen M.L."/>
            <person name="Rehman M."/>
            <person name="Walther T.C."/>
            <person name="Olsen J.V."/>
            <person name="Mann M."/>
        </authorList>
    </citation>
    <scope>ACETYLATION [LARGE SCALE ANALYSIS] AT LYS-12</scope>
    <scope>IDENTIFICATION BY MASS SPECTROMETRY [LARGE SCALE ANALYSIS]</scope>
</reference>
<reference key="8">
    <citation type="journal article" date="2010" name="Sci. Signal.">
        <title>Quantitative phosphoproteomics reveals widespread full phosphorylation site occupancy during mitosis.</title>
        <authorList>
            <person name="Olsen J.V."/>
            <person name="Vermeulen M."/>
            <person name="Santamaria A."/>
            <person name="Kumar C."/>
            <person name="Miller M.L."/>
            <person name="Jensen L.J."/>
            <person name="Gnad F."/>
            <person name="Cox J."/>
            <person name="Jensen T.S."/>
            <person name="Nigg E.A."/>
            <person name="Brunak S."/>
            <person name="Mann M."/>
        </authorList>
    </citation>
    <scope>PHOSPHORYLATION [LARGE SCALE ANALYSIS] AT SER-238</scope>
    <scope>IDENTIFICATION BY MASS SPECTROMETRY [LARGE SCALE ANALYSIS]</scope>
    <source>
        <tissue>Cervix carcinoma</tissue>
    </source>
</reference>
<reference key="9">
    <citation type="journal article" date="2011" name="BMC Syst. Biol.">
        <title>Initial characterization of the human central proteome.</title>
        <authorList>
            <person name="Burkard T.R."/>
            <person name="Planyavsky M."/>
            <person name="Kaupe I."/>
            <person name="Breitwieser F.P."/>
            <person name="Buerckstuemmer T."/>
            <person name="Bennett K.L."/>
            <person name="Superti-Furga G."/>
            <person name="Colinge J."/>
        </authorList>
    </citation>
    <scope>IDENTIFICATION BY MASS SPECTROMETRY [LARGE SCALE ANALYSIS]</scope>
</reference>
<reference key="10">
    <citation type="journal article" date="2011" name="Sci. Signal.">
        <title>System-wide temporal characterization of the proteome and phosphoproteome of human embryonic stem cell differentiation.</title>
        <authorList>
            <person name="Rigbolt K.T."/>
            <person name="Prokhorova T.A."/>
            <person name="Akimov V."/>
            <person name="Henningsen J."/>
            <person name="Johansen P.T."/>
            <person name="Kratchmarova I."/>
            <person name="Kassem M."/>
            <person name="Mann M."/>
            <person name="Olsen J.V."/>
            <person name="Blagoev B."/>
        </authorList>
    </citation>
    <scope>PHOSPHORYLATION [LARGE SCALE ANALYSIS] AT SER-238 AND SER-254</scope>
    <scope>IDENTIFICATION BY MASS SPECTROMETRY [LARGE SCALE ANALYSIS]</scope>
</reference>
<reference key="11">
    <citation type="journal article" date="2013" name="J. Proteome Res.">
        <title>Toward a comprehensive characterization of a human cancer cell phosphoproteome.</title>
        <authorList>
            <person name="Zhou H."/>
            <person name="Di Palma S."/>
            <person name="Preisinger C."/>
            <person name="Peng M."/>
            <person name="Polat A.N."/>
            <person name="Heck A.J."/>
            <person name="Mohammed S."/>
        </authorList>
    </citation>
    <scope>PHOSPHORYLATION [LARGE SCALE ANALYSIS] AT SER-238 AND SER-254</scope>
    <scope>IDENTIFICATION BY MASS SPECTROMETRY [LARGE SCALE ANALYSIS]</scope>
    <source>
        <tissue>Cervix carcinoma</tissue>
        <tissue>Erythroleukemia</tissue>
    </source>
</reference>
<reference key="12">
    <citation type="journal article" date="2006" name="Science">
        <title>The consensus coding sequences of human breast and colorectal cancers.</title>
        <authorList>
            <person name="Sjoeblom T."/>
            <person name="Jones S."/>
            <person name="Wood L.D."/>
            <person name="Parsons D.W."/>
            <person name="Lin J."/>
            <person name="Barber T.D."/>
            <person name="Mandelker D."/>
            <person name="Leary R.J."/>
            <person name="Ptak J."/>
            <person name="Silliman N."/>
            <person name="Szabo S."/>
            <person name="Buckhaults P."/>
            <person name="Farrell C."/>
            <person name="Meeh P."/>
            <person name="Markowitz S.D."/>
            <person name="Willis J."/>
            <person name="Dawson D."/>
            <person name="Willson J.K.V."/>
            <person name="Gazdar A.F."/>
            <person name="Hartigan J."/>
            <person name="Wu L."/>
            <person name="Liu C."/>
            <person name="Parmigiani G."/>
            <person name="Park B.H."/>
            <person name="Bachman K.E."/>
            <person name="Papadopoulos N."/>
            <person name="Vogelstein B."/>
            <person name="Kinzler K.W."/>
            <person name="Velculescu V.E."/>
        </authorList>
    </citation>
    <scope>VARIANT [LARGE SCALE ANALYSIS] PHE-365</scope>
</reference>
<sequence length="443" mass="48984">MAAHRKHVFVEKVLQRLFPPVPSGQGKREPQTLAVQNPPKKVTSEKVSQKHAEPLTDTGSETPTARRLYTASGPPEGYVPCWPEPSSCGSPENASSGDDTEDQDPHDQPKRRRIRKHKSKKKFKNPNNVLIEQAELEKQQSLLQEKSQRQHTDGTTISKNKKRKLKKKQQIKRKKAAGLAAKAAGVSFMYQPEDSSNEGEGVGEACEEDGVDTSEEDPTLAGEEDVKDTREEDGADASEEDLTRARQEEGADASEEDPTPAGEEDVKDAREEDGVDTIEEDLTRAGEEDGKDTREEDGADASEEDPTWAGEEEGADSGEEDGADASEEDDTITNEKAHSILNFLKSTQEMYFYDGVSRDAASAALADAAEELLDRLASHSMLPSDVSILYHMKTLLLLQDTERLKHALEMFPEHCTMPPDHARVISAFFSYWITHILPEKSSD</sequence>